<proteinExistence type="inferred from homology"/>
<dbReference type="EMBL" id="BA000019">
    <property type="protein sequence ID" value="BAB73165.1"/>
    <property type="molecule type" value="Genomic_DNA"/>
</dbReference>
<dbReference type="PIR" id="AE1957">
    <property type="entry name" value="AE1957"/>
</dbReference>
<dbReference type="RefSeq" id="WP_010995381.1">
    <property type="nucleotide sequence ID" value="NZ_RSCN01000008.1"/>
</dbReference>
<dbReference type="SMR" id="Q8YXK4"/>
<dbReference type="STRING" id="103690.gene:10493222"/>
<dbReference type="KEGG" id="ana:alr1208"/>
<dbReference type="eggNOG" id="COG0233">
    <property type="taxonomic scope" value="Bacteria"/>
</dbReference>
<dbReference type="OrthoDB" id="9804006at2"/>
<dbReference type="Proteomes" id="UP000002483">
    <property type="component" value="Chromosome"/>
</dbReference>
<dbReference type="GO" id="GO:0005737">
    <property type="term" value="C:cytoplasm"/>
    <property type="evidence" value="ECO:0007669"/>
    <property type="project" value="UniProtKB-SubCell"/>
</dbReference>
<dbReference type="GO" id="GO:0043023">
    <property type="term" value="F:ribosomal large subunit binding"/>
    <property type="evidence" value="ECO:0007669"/>
    <property type="project" value="TreeGrafter"/>
</dbReference>
<dbReference type="GO" id="GO:0006415">
    <property type="term" value="P:translational termination"/>
    <property type="evidence" value="ECO:0007669"/>
    <property type="project" value="UniProtKB-UniRule"/>
</dbReference>
<dbReference type="CDD" id="cd00520">
    <property type="entry name" value="RRF"/>
    <property type="match status" value="1"/>
</dbReference>
<dbReference type="FunFam" id="1.10.132.20:FF:000001">
    <property type="entry name" value="Ribosome-recycling factor"/>
    <property type="match status" value="1"/>
</dbReference>
<dbReference type="FunFam" id="3.30.1360.40:FF:000001">
    <property type="entry name" value="Ribosome-recycling factor"/>
    <property type="match status" value="1"/>
</dbReference>
<dbReference type="Gene3D" id="3.30.1360.40">
    <property type="match status" value="1"/>
</dbReference>
<dbReference type="Gene3D" id="1.10.132.20">
    <property type="entry name" value="Ribosome-recycling factor"/>
    <property type="match status" value="1"/>
</dbReference>
<dbReference type="HAMAP" id="MF_00040">
    <property type="entry name" value="RRF"/>
    <property type="match status" value="1"/>
</dbReference>
<dbReference type="InterPro" id="IPR002661">
    <property type="entry name" value="Ribosome_recyc_fac"/>
</dbReference>
<dbReference type="InterPro" id="IPR023584">
    <property type="entry name" value="Ribosome_recyc_fac_dom"/>
</dbReference>
<dbReference type="InterPro" id="IPR036191">
    <property type="entry name" value="RRF_sf"/>
</dbReference>
<dbReference type="NCBIfam" id="TIGR00496">
    <property type="entry name" value="frr"/>
    <property type="match status" value="1"/>
</dbReference>
<dbReference type="PANTHER" id="PTHR20982:SF3">
    <property type="entry name" value="MITOCHONDRIAL RIBOSOME RECYCLING FACTOR PSEUDO 1"/>
    <property type="match status" value="1"/>
</dbReference>
<dbReference type="PANTHER" id="PTHR20982">
    <property type="entry name" value="RIBOSOME RECYCLING FACTOR"/>
    <property type="match status" value="1"/>
</dbReference>
<dbReference type="Pfam" id="PF01765">
    <property type="entry name" value="RRF"/>
    <property type="match status" value="1"/>
</dbReference>
<dbReference type="SUPFAM" id="SSF55194">
    <property type="entry name" value="Ribosome recycling factor, RRF"/>
    <property type="match status" value="1"/>
</dbReference>
<comment type="function">
    <text evidence="1">Responsible for the release of ribosomes from messenger RNA at the termination of protein biosynthesis. May increase the efficiency of translation by recycling ribosomes from one round of translation to another.</text>
</comment>
<comment type="subcellular location">
    <subcellularLocation>
        <location evidence="1">Cytoplasm</location>
    </subcellularLocation>
</comment>
<comment type="similarity">
    <text evidence="1">Belongs to the RRF family.</text>
</comment>
<reference key="1">
    <citation type="journal article" date="2001" name="DNA Res.">
        <title>Complete genomic sequence of the filamentous nitrogen-fixing cyanobacterium Anabaena sp. strain PCC 7120.</title>
        <authorList>
            <person name="Kaneko T."/>
            <person name="Nakamura Y."/>
            <person name="Wolk C.P."/>
            <person name="Kuritz T."/>
            <person name="Sasamoto S."/>
            <person name="Watanabe A."/>
            <person name="Iriguchi M."/>
            <person name="Ishikawa A."/>
            <person name="Kawashima K."/>
            <person name="Kimura T."/>
            <person name="Kishida Y."/>
            <person name="Kohara M."/>
            <person name="Matsumoto M."/>
            <person name="Matsuno A."/>
            <person name="Muraki A."/>
            <person name="Nakazaki N."/>
            <person name="Shimpo S."/>
            <person name="Sugimoto M."/>
            <person name="Takazawa M."/>
            <person name="Yamada M."/>
            <person name="Yasuda M."/>
            <person name="Tabata S."/>
        </authorList>
    </citation>
    <scope>NUCLEOTIDE SEQUENCE [LARGE SCALE GENOMIC DNA]</scope>
    <source>
        <strain>PCC 7120 / SAG 25.82 / UTEX 2576</strain>
    </source>
</reference>
<evidence type="ECO:0000255" key="1">
    <source>
        <dbReference type="HAMAP-Rule" id="MF_00040"/>
    </source>
</evidence>
<name>RRF_NOSS1</name>
<feature type="chain" id="PRO_0000167399" description="Ribosome-recycling factor">
    <location>
        <begin position="1"/>
        <end position="182"/>
    </location>
</feature>
<keyword id="KW-0963">Cytoplasm</keyword>
<keyword id="KW-0648">Protein biosynthesis</keyword>
<keyword id="KW-1185">Reference proteome</keyword>
<accession>Q8YXK4</accession>
<gene>
    <name evidence="1" type="primary">frr</name>
    <name type="ordered locus">alr1208</name>
</gene>
<sequence length="182" mass="20237">MKLAEAESKMQHTVEATQRAFNTIRTGRANASLLDKVLVDYYGSPTPLKSLANISTPDATTILIQPYDKSSLNIVEKAISLSDVGLTPSNDGAVIRLNIPPLTSDRRKELVKIAAKYAEEGRVAIRNIRRDAVDSIRKLEKNAEVSEDEAKDQQDKLQKLTNKYTARIDELLVEKEKDISTV</sequence>
<organism>
    <name type="scientific">Nostoc sp. (strain PCC 7120 / SAG 25.82 / UTEX 2576)</name>
    <dbReference type="NCBI Taxonomy" id="103690"/>
    <lineage>
        <taxon>Bacteria</taxon>
        <taxon>Bacillati</taxon>
        <taxon>Cyanobacteriota</taxon>
        <taxon>Cyanophyceae</taxon>
        <taxon>Nostocales</taxon>
        <taxon>Nostocaceae</taxon>
        <taxon>Nostoc</taxon>
    </lineage>
</organism>
<protein>
    <recommendedName>
        <fullName evidence="1">Ribosome-recycling factor</fullName>
        <shortName evidence="1">RRF</shortName>
    </recommendedName>
    <alternativeName>
        <fullName evidence="1">Ribosome-releasing factor</fullName>
    </alternativeName>
</protein>